<feature type="chain" id="PRO_0000051520" description="Uncharacterized WD repeat-containing protein sll1491">
    <location>
        <begin position="1"/>
        <end position="348"/>
    </location>
</feature>
<feature type="repeat" description="WD 1">
    <location>
        <begin position="59"/>
        <end position="98"/>
    </location>
</feature>
<feature type="repeat" description="WD 2">
    <location>
        <begin position="142"/>
        <end position="182"/>
    </location>
</feature>
<feature type="repeat" description="WD 3">
    <location>
        <begin position="185"/>
        <end position="226"/>
    </location>
</feature>
<feature type="repeat" description="WD 4">
    <location>
        <begin position="229"/>
        <end position="267"/>
    </location>
</feature>
<feature type="repeat" description="WD 5">
    <location>
        <begin position="270"/>
        <end position="309"/>
    </location>
</feature>
<feature type="repeat" description="WD 6">
    <location>
        <begin position="312"/>
        <end position="347"/>
    </location>
</feature>
<protein>
    <recommendedName>
        <fullName>Uncharacterized WD repeat-containing protein sll1491</fullName>
    </recommendedName>
</protein>
<organism>
    <name type="scientific">Synechocystis sp. (strain ATCC 27184 / PCC 6803 / Kazusa)</name>
    <dbReference type="NCBI Taxonomy" id="1111708"/>
    <lineage>
        <taxon>Bacteria</taxon>
        <taxon>Bacillati</taxon>
        <taxon>Cyanobacteriota</taxon>
        <taxon>Cyanophyceae</taxon>
        <taxon>Synechococcales</taxon>
        <taxon>Merismopediaceae</taxon>
        <taxon>Synechocystis</taxon>
    </lineage>
</organism>
<sequence length="348" mass="37347">MNNYFPRLKQFSAPATFFLTVACLVYPGENAHANASTPNPYTVAQTTASPSVAVENLSGFQGIITALNITPDGKYLAVATADNQITLIDLANQEVVYSQRSPVNNFADLAISADGQWLAIAADNNVDVRRVRDGMRVETLVGHTDKVSGVAFSPDGETIVSVSGGDRTIRIWERASGNLIQTLADNLGPTTSVVFTPDGSQFITGAIGQDRTIKFWDANTFELLGTSPQQPGFINGLAVTPDGRKLVGAVRNFVKAWNLADAKELFSVRGPSLEINTIAVSPNNRWVATANKEGTIMIFDLANGKQVTTLRGHQGWVLSLAFSPDGNTLYSGAEDKTVKIWDLSALAR</sequence>
<accession>P74598</accession>
<gene>
    <name type="ordered locus">sll1491</name>
</gene>
<proteinExistence type="predicted"/>
<keyword id="KW-1185">Reference proteome</keyword>
<keyword id="KW-0677">Repeat</keyword>
<keyword id="KW-0853">WD repeat</keyword>
<name>Y1491_SYNY3</name>
<reference key="1">
    <citation type="journal article" date="1996" name="DNA Res.">
        <title>Sequence analysis of the genome of the unicellular cyanobacterium Synechocystis sp. strain PCC6803. II. Sequence determination of the entire genome and assignment of potential protein-coding regions.</title>
        <authorList>
            <person name="Kaneko T."/>
            <person name="Sato S."/>
            <person name="Kotani H."/>
            <person name="Tanaka A."/>
            <person name="Asamizu E."/>
            <person name="Nakamura Y."/>
            <person name="Miyajima N."/>
            <person name="Hirosawa M."/>
            <person name="Sugiura M."/>
            <person name="Sasamoto S."/>
            <person name="Kimura T."/>
            <person name="Hosouchi T."/>
            <person name="Matsuno A."/>
            <person name="Muraki A."/>
            <person name="Nakazaki N."/>
            <person name="Naruo K."/>
            <person name="Okumura S."/>
            <person name="Shimpo S."/>
            <person name="Takeuchi C."/>
            <person name="Wada T."/>
            <person name="Watanabe A."/>
            <person name="Yamada M."/>
            <person name="Yasuda M."/>
            <person name="Tabata S."/>
        </authorList>
    </citation>
    <scope>NUCLEOTIDE SEQUENCE [LARGE SCALE GENOMIC DNA]</scope>
    <source>
        <strain>ATCC 27184 / PCC 6803 / Kazusa</strain>
    </source>
</reference>
<dbReference type="EMBL" id="BA000022">
    <property type="protein sequence ID" value="BAA18706.1"/>
    <property type="molecule type" value="Genomic_DNA"/>
</dbReference>
<dbReference type="PIR" id="S76794">
    <property type="entry name" value="S76794"/>
</dbReference>
<dbReference type="SMR" id="P74598"/>
<dbReference type="IntAct" id="P74598">
    <property type="interactions" value="1"/>
</dbReference>
<dbReference type="STRING" id="1148.gene:10500478"/>
<dbReference type="PaxDb" id="1148-1653795"/>
<dbReference type="EnsemblBacteria" id="BAA18706">
    <property type="protein sequence ID" value="BAA18706"/>
    <property type="gene ID" value="BAA18706"/>
</dbReference>
<dbReference type="KEGG" id="syn:sll1491"/>
<dbReference type="eggNOG" id="COG2319">
    <property type="taxonomic scope" value="Bacteria"/>
</dbReference>
<dbReference type="InParanoid" id="P74598"/>
<dbReference type="PhylomeDB" id="P74598"/>
<dbReference type="Proteomes" id="UP000001425">
    <property type="component" value="Chromosome"/>
</dbReference>
<dbReference type="GO" id="GO:0030288">
    <property type="term" value="C:outer membrane-bounded periplasmic space"/>
    <property type="evidence" value="ECO:0007005"/>
    <property type="project" value="UniProtKB"/>
</dbReference>
<dbReference type="CDD" id="cd00200">
    <property type="entry name" value="WD40"/>
    <property type="match status" value="1"/>
</dbReference>
<dbReference type="Gene3D" id="2.130.10.10">
    <property type="entry name" value="YVTN repeat-like/Quinoprotein amine dehydrogenase"/>
    <property type="match status" value="2"/>
</dbReference>
<dbReference type="InterPro" id="IPR024977">
    <property type="entry name" value="Apc4-like_WD40_dom"/>
</dbReference>
<dbReference type="InterPro" id="IPR011047">
    <property type="entry name" value="Quinoprotein_ADH-like_sf"/>
</dbReference>
<dbReference type="InterPro" id="IPR015943">
    <property type="entry name" value="WD40/YVTN_repeat-like_dom_sf"/>
</dbReference>
<dbReference type="InterPro" id="IPR019775">
    <property type="entry name" value="WD40_repeat_CS"/>
</dbReference>
<dbReference type="InterPro" id="IPR001680">
    <property type="entry name" value="WD40_rpt"/>
</dbReference>
<dbReference type="PANTHER" id="PTHR19879">
    <property type="entry name" value="TRANSCRIPTION INITIATION FACTOR TFIID"/>
    <property type="match status" value="1"/>
</dbReference>
<dbReference type="PANTHER" id="PTHR19879:SF9">
    <property type="entry name" value="TRANSCRIPTION INITIATION FACTOR TFIID SUBUNIT 5"/>
    <property type="match status" value="1"/>
</dbReference>
<dbReference type="Pfam" id="PF12894">
    <property type="entry name" value="ANAPC4_WD40"/>
    <property type="match status" value="1"/>
</dbReference>
<dbReference type="Pfam" id="PF00400">
    <property type="entry name" value="WD40"/>
    <property type="match status" value="4"/>
</dbReference>
<dbReference type="SMART" id="SM00320">
    <property type="entry name" value="WD40"/>
    <property type="match status" value="7"/>
</dbReference>
<dbReference type="SUPFAM" id="SSF50998">
    <property type="entry name" value="Quinoprotein alcohol dehydrogenase-like"/>
    <property type="match status" value="1"/>
</dbReference>
<dbReference type="PROSITE" id="PS00678">
    <property type="entry name" value="WD_REPEATS_1"/>
    <property type="match status" value="2"/>
</dbReference>
<dbReference type="PROSITE" id="PS50082">
    <property type="entry name" value="WD_REPEATS_2"/>
    <property type="match status" value="4"/>
</dbReference>
<dbReference type="PROSITE" id="PS50294">
    <property type="entry name" value="WD_REPEATS_REGION"/>
    <property type="match status" value="1"/>
</dbReference>